<feature type="chain" id="PRO_0000346204" description="D-ribose pyranase">
    <location>
        <begin position="1"/>
        <end position="139"/>
    </location>
</feature>
<feature type="active site" description="Proton donor" evidence="1">
    <location>
        <position position="20"/>
    </location>
</feature>
<feature type="binding site" evidence="1">
    <location>
        <position position="28"/>
    </location>
    <ligand>
        <name>substrate</name>
    </ligand>
</feature>
<feature type="binding site" evidence="1">
    <location>
        <position position="106"/>
    </location>
    <ligand>
        <name>substrate</name>
    </ligand>
</feature>
<feature type="binding site" evidence="1">
    <location>
        <begin position="128"/>
        <end position="130"/>
    </location>
    <ligand>
        <name>substrate</name>
    </ligand>
</feature>
<evidence type="ECO:0000255" key="1">
    <source>
        <dbReference type="HAMAP-Rule" id="MF_01661"/>
    </source>
</evidence>
<comment type="function">
    <text evidence="1">Catalyzes the interconversion of beta-pyran and beta-furan forms of D-ribose.</text>
</comment>
<comment type="catalytic activity">
    <reaction evidence="1">
        <text>beta-D-ribopyranose = beta-D-ribofuranose</text>
        <dbReference type="Rhea" id="RHEA:25432"/>
        <dbReference type="ChEBI" id="CHEBI:27476"/>
        <dbReference type="ChEBI" id="CHEBI:47002"/>
        <dbReference type="EC" id="5.4.99.62"/>
    </reaction>
</comment>
<comment type="pathway">
    <text evidence="1">Carbohydrate metabolism; D-ribose degradation; D-ribose 5-phosphate from beta-D-ribopyranose: step 1/2.</text>
</comment>
<comment type="subunit">
    <text evidence="1">Homodecamer.</text>
</comment>
<comment type="subcellular location">
    <subcellularLocation>
        <location evidence="1">Cytoplasm</location>
    </subcellularLocation>
</comment>
<comment type="similarity">
    <text evidence="1">Belongs to the RbsD / FucU family. RbsD subfamily.</text>
</comment>
<accession>A8A6L1</accession>
<protein>
    <recommendedName>
        <fullName evidence="1">D-ribose pyranase</fullName>
        <ecNumber evidence="1">5.4.99.62</ecNumber>
    </recommendedName>
</protein>
<sequence length="139" mass="15283">MKKGTVLNSDISSVISRLGHTDTLVVCDAGLPIPKSTTRIDMALTQGVPSFMQVLGVVTNEMQVEAAIIAEEIKQHNPQLHETLLTHLEQLQKHQGNTIEIRYTTHEQFKQQTAESQAVIRSGECSPYANIILCAGVTF</sequence>
<proteinExistence type="inferred from homology"/>
<keyword id="KW-0119">Carbohydrate metabolism</keyword>
<keyword id="KW-0963">Cytoplasm</keyword>
<keyword id="KW-0413">Isomerase</keyword>
<dbReference type="EC" id="5.4.99.62" evidence="1"/>
<dbReference type="EMBL" id="CP000802">
    <property type="protein sequence ID" value="ABV08165.1"/>
    <property type="molecule type" value="Genomic_DNA"/>
</dbReference>
<dbReference type="RefSeq" id="WP_000715936.1">
    <property type="nucleotide sequence ID" value="NC_009800.1"/>
</dbReference>
<dbReference type="SMR" id="A8A6L1"/>
<dbReference type="GeneID" id="93778201"/>
<dbReference type="KEGG" id="ecx:EcHS_A3964"/>
<dbReference type="HOGENOM" id="CLU_135498_0_0_6"/>
<dbReference type="UniPathway" id="UPA00916">
    <property type="reaction ID" value="UER00888"/>
</dbReference>
<dbReference type="GO" id="GO:0005829">
    <property type="term" value="C:cytosol"/>
    <property type="evidence" value="ECO:0007669"/>
    <property type="project" value="TreeGrafter"/>
</dbReference>
<dbReference type="GO" id="GO:0062193">
    <property type="term" value="F:D-ribose pyranase activity"/>
    <property type="evidence" value="ECO:0007669"/>
    <property type="project" value="UniProtKB-EC"/>
</dbReference>
<dbReference type="GO" id="GO:0016872">
    <property type="term" value="F:intramolecular lyase activity"/>
    <property type="evidence" value="ECO:0007669"/>
    <property type="project" value="UniProtKB-UniRule"/>
</dbReference>
<dbReference type="GO" id="GO:0048029">
    <property type="term" value="F:monosaccharide binding"/>
    <property type="evidence" value="ECO:0007669"/>
    <property type="project" value="InterPro"/>
</dbReference>
<dbReference type="GO" id="GO:0019303">
    <property type="term" value="P:D-ribose catabolic process"/>
    <property type="evidence" value="ECO:0007669"/>
    <property type="project" value="UniProtKB-UniRule"/>
</dbReference>
<dbReference type="FunFam" id="3.40.1650.10:FF:000002">
    <property type="entry name" value="D-ribose pyranase"/>
    <property type="match status" value="1"/>
</dbReference>
<dbReference type="Gene3D" id="3.40.1650.10">
    <property type="entry name" value="RbsD-like domain"/>
    <property type="match status" value="1"/>
</dbReference>
<dbReference type="HAMAP" id="MF_01661">
    <property type="entry name" value="D_rib_pyranase"/>
    <property type="match status" value="1"/>
</dbReference>
<dbReference type="InterPro" id="IPR023064">
    <property type="entry name" value="D-ribose_pyranase"/>
</dbReference>
<dbReference type="InterPro" id="IPR023750">
    <property type="entry name" value="RbsD-like_sf"/>
</dbReference>
<dbReference type="InterPro" id="IPR007721">
    <property type="entry name" value="RbsD_FucU"/>
</dbReference>
<dbReference type="NCBIfam" id="NF008761">
    <property type="entry name" value="PRK11797.1"/>
    <property type="match status" value="1"/>
</dbReference>
<dbReference type="PANTHER" id="PTHR37831">
    <property type="entry name" value="D-RIBOSE PYRANASE"/>
    <property type="match status" value="1"/>
</dbReference>
<dbReference type="PANTHER" id="PTHR37831:SF1">
    <property type="entry name" value="D-RIBOSE PYRANASE"/>
    <property type="match status" value="1"/>
</dbReference>
<dbReference type="Pfam" id="PF05025">
    <property type="entry name" value="RbsD_FucU"/>
    <property type="match status" value="1"/>
</dbReference>
<dbReference type="SUPFAM" id="SSF102546">
    <property type="entry name" value="RbsD-like"/>
    <property type="match status" value="1"/>
</dbReference>
<name>RBSD_ECOHS</name>
<organism>
    <name type="scientific">Escherichia coli O9:H4 (strain HS)</name>
    <dbReference type="NCBI Taxonomy" id="331112"/>
    <lineage>
        <taxon>Bacteria</taxon>
        <taxon>Pseudomonadati</taxon>
        <taxon>Pseudomonadota</taxon>
        <taxon>Gammaproteobacteria</taxon>
        <taxon>Enterobacterales</taxon>
        <taxon>Enterobacteriaceae</taxon>
        <taxon>Escherichia</taxon>
    </lineage>
</organism>
<reference key="1">
    <citation type="journal article" date="2008" name="J. Bacteriol.">
        <title>The pangenome structure of Escherichia coli: comparative genomic analysis of E. coli commensal and pathogenic isolates.</title>
        <authorList>
            <person name="Rasko D.A."/>
            <person name="Rosovitz M.J."/>
            <person name="Myers G.S.A."/>
            <person name="Mongodin E.F."/>
            <person name="Fricke W.F."/>
            <person name="Gajer P."/>
            <person name="Crabtree J."/>
            <person name="Sebaihia M."/>
            <person name="Thomson N.R."/>
            <person name="Chaudhuri R."/>
            <person name="Henderson I.R."/>
            <person name="Sperandio V."/>
            <person name="Ravel J."/>
        </authorList>
    </citation>
    <scope>NUCLEOTIDE SEQUENCE [LARGE SCALE GENOMIC DNA]</scope>
    <source>
        <strain>HS</strain>
    </source>
</reference>
<gene>
    <name evidence="1" type="primary">rbsD</name>
    <name type="ordered locus">EcHS_A3964</name>
</gene>